<name>YCF4_AMBTC</name>
<feature type="chain" id="PRO_0000217594" description="Photosystem I assembly protein Ycf4">
    <location>
        <begin position="1"/>
        <end position="235"/>
    </location>
</feature>
<feature type="transmembrane region" description="Helical" evidence="1">
    <location>
        <begin position="21"/>
        <end position="43"/>
    </location>
</feature>
<feature type="transmembrane region" description="Helical" evidence="1">
    <location>
        <begin position="63"/>
        <end position="85"/>
    </location>
</feature>
<organism>
    <name type="scientific">Amborella trichopoda</name>
    <dbReference type="NCBI Taxonomy" id="13333"/>
    <lineage>
        <taxon>Eukaryota</taxon>
        <taxon>Viridiplantae</taxon>
        <taxon>Streptophyta</taxon>
        <taxon>Embryophyta</taxon>
        <taxon>Tracheophyta</taxon>
        <taxon>Spermatophyta</taxon>
        <taxon>Magnoliopsida</taxon>
        <taxon>Amborellales</taxon>
        <taxon>Amborellaceae</taxon>
        <taxon>Amborella</taxon>
    </lineage>
</organism>
<comment type="function">
    <text evidence="1">Seems to be required for the assembly of the photosystem I complex.</text>
</comment>
<comment type="subcellular location">
    <subcellularLocation>
        <location evidence="1">Plastid</location>
        <location evidence="1">Chloroplast thylakoid membrane</location>
        <topology evidence="1">Multi-pass membrane protein</topology>
    </subcellularLocation>
</comment>
<comment type="similarity">
    <text evidence="1">Belongs to the Ycf4 family.</text>
</comment>
<evidence type="ECO:0000255" key="1">
    <source>
        <dbReference type="HAMAP-Rule" id="MF_00437"/>
    </source>
</evidence>
<protein>
    <recommendedName>
        <fullName evidence="1">Photosystem I assembly protein Ycf4</fullName>
    </recommendedName>
</protein>
<keyword id="KW-0150">Chloroplast</keyword>
<keyword id="KW-0472">Membrane</keyword>
<keyword id="KW-0602">Photosynthesis</keyword>
<keyword id="KW-0934">Plastid</keyword>
<keyword id="KW-1185">Reference proteome</keyword>
<keyword id="KW-0793">Thylakoid</keyword>
<keyword id="KW-0812">Transmembrane</keyword>
<keyword id="KW-1133">Transmembrane helix</keyword>
<geneLocation type="chloroplast"/>
<gene>
    <name evidence="1" type="primary">ycf4</name>
</gene>
<proteinExistence type="inferred from homology"/>
<reference key="1">
    <citation type="journal article" date="2003" name="Mol. Biol. Evol.">
        <title>Analysis of the Amborella trichopoda chloroplast genome sequence suggests that Amborella is not a basal angiosperm.</title>
        <authorList>
            <person name="Goremykin V.V."/>
            <person name="Hirsch-Ernst K.I."/>
            <person name="Wolfl S."/>
            <person name="Hellwig F.H."/>
        </authorList>
    </citation>
    <scope>NUCLEOTIDE SEQUENCE [LARGE SCALE GENOMIC DNA]</scope>
</reference>
<accession>Q70XZ2</accession>
<dbReference type="EMBL" id="AJ506156">
    <property type="protein sequence ID" value="CAD45118.1"/>
    <property type="molecule type" value="Genomic_DNA"/>
</dbReference>
<dbReference type="RefSeq" id="NP_904110.1">
    <property type="nucleotide sequence ID" value="NC_005086.1"/>
</dbReference>
<dbReference type="STRING" id="13333.Q70XZ2"/>
<dbReference type="GeneID" id="2546510"/>
<dbReference type="KEGG" id="atr:2546510"/>
<dbReference type="OrthoDB" id="1927442at2759"/>
<dbReference type="Proteomes" id="UP000017836">
    <property type="component" value="Chloroplast"/>
</dbReference>
<dbReference type="GO" id="GO:0009535">
    <property type="term" value="C:chloroplast thylakoid membrane"/>
    <property type="evidence" value="ECO:0007669"/>
    <property type="project" value="UniProtKB-SubCell"/>
</dbReference>
<dbReference type="GO" id="GO:0009522">
    <property type="term" value="C:photosystem I"/>
    <property type="evidence" value="ECO:0007669"/>
    <property type="project" value="InterPro"/>
</dbReference>
<dbReference type="GO" id="GO:0015979">
    <property type="term" value="P:photosynthesis"/>
    <property type="evidence" value="ECO:0007669"/>
    <property type="project" value="UniProtKB-UniRule"/>
</dbReference>
<dbReference type="HAMAP" id="MF_00437">
    <property type="entry name" value="Ycf4"/>
    <property type="match status" value="1"/>
</dbReference>
<dbReference type="InterPro" id="IPR003359">
    <property type="entry name" value="PSI_Ycf4_assembly"/>
</dbReference>
<dbReference type="PANTHER" id="PTHR33288">
    <property type="match status" value="1"/>
</dbReference>
<dbReference type="PANTHER" id="PTHR33288:SF4">
    <property type="entry name" value="PHOTOSYSTEM I ASSEMBLY PROTEIN YCF4"/>
    <property type="match status" value="1"/>
</dbReference>
<dbReference type="Pfam" id="PF02392">
    <property type="entry name" value="Ycf4"/>
    <property type="match status" value="1"/>
</dbReference>
<sequence>MNWRSERIWIELITGSRKTSNLCWACILFLGSLGFLLVGTSSYLGRNLISLFPSQQILFFPQGIVMSFYGIAGLFISSYLWCTILWNVGSGYDRFDRKEGIVCIFRWGFPGRNRRIFFRFLMRDIRSIRMEVKEGIYPRRVLSIEIRSQGSIPLTRTDENFTPREIEQKAAELAYFLRVPIEVFRTKEWILSRHGVGNPRILFNTTDLSSEQLLIRSKHVSVRSYFRSLLFPVCG</sequence>